<feature type="chain" id="PRO_1000050355" description="L-seryl-tRNA(Sec) selenium transferase">
    <location>
        <begin position="1"/>
        <end position="441"/>
    </location>
</feature>
<feature type="modified residue" description="N6-(pyridoxal phosphate)lysine" evidence="1">
    <location>
        <position position="283"/>
    </location>
</feature>
<dbReference type="EC" id="2.9.1.1" evidence="1"/>
<dbReference type="EMBL" id="CP000792">
    <property type="protein sequence ID" value="EAT98901.1"/>
    <property type="molecule type" value="Genomic_DNA"/>
</dbReference>
<dbReference type="RefSeq" id="WP_012001215.1">
    <property type="nucleotide sequence ID" value="NC_009802.2"/>
</dbReference>
<dbReference type="SMR" id="A7ZBQ0"/>
<dbReference type="STRING" id="360104.CCC13826_0755"/>
<dbReference type="KEGG" id="cco:CCC13826_0755"/>
<dbReference type="eggNOG" id="COG1921">
    <property type="taxonomic scope" value="Bacteria"/>
</dbReference>
<dbReference type="HOGENOM" id="CLU_038142_1_0_7"/>
<dbReference type="OrthoDB" id="9787096at2"/>
<dbReference type="UniPathway" id="UPA00906">
    <property type="reaction ID" value="UER00896"/>
</dbReference>
<dbReference type="Proteomes" id="UP000001121">
    <property type="component" value="Chromosome"/>
</dbReference>
<dbReference type="GO" id="GO:0005737">
    <property type="term" value="C:cytoplasm"/>
    <property type="evidence" value="ECO:0007669"/>
    <property type="project" value="UniProtKB-SubCell"/>
</dbReference>
<dbReference type="GO" id="GO:0004125">
    <property type="term" value="F:L-seryl-tRNA(Sec) selenium transferase activity"/>
    <property type="evidence" value="ECO:0007669"/>
    <property type="project" value="UniProtKB-UniRule"/>
</dbReference>
<dbReference type="GO" id="GO:0001717">
    <property type="term" value="P:conversion of seryl-tRNAsec to selenocys-tRNAsec"/>
    <property type="evidence" value="ECO:0007669"/>
    <property type="project" value="UniProtKB-UniRule"/>
</dbReference>
<dbReference type="GO" id="GO:0001514">
    <property type="term" value="P:selenocysteine incorporation"/>
    <property type="evidence" value="ECO:0007669"/>
    <property type="project" value="UniProtKB-UniRule"/>
</dbReference>
<dbReference type="Gene3D" id="3.90.1150.180">
    <property type="match status" value="1"/>
</dbReference>
<dbReference type="Gene3D" id="3.40.640.10">
    <property type="entry name" value="Type I PLP-dependent aspartate aminotransferase-like (Major domain)"/>
    <property type="match status" value="1"/>
</dbReference>
<dbReference type="HAMAP" id="MF_00423">
    <property type="entry name" value="SelA"/>
    <property type="match status" value="1"/>
</dbReference>
<dbReference type="InterPro" id="IPR015424">
    <property type="entry name" value="PyrdxlP-dep_Trfase"/>
</dbReference>
<dbReference type="InterPro" id="IPR015421">
    <property type="entry name" value="PyrdxlP-dep_Trfase_major"/>
</dbReference>
<dbReference type="InterPro" id="IPR018319">
    <property type="entry name" value="SelA-like"/>
</dbReference>
<dbReference type="InterPro" id="IPR004534">
    <property type="entry name" value="SelA_trans"/>
</dbReference>
<dbReference type="NCBIfam" id="TIGR00474">
    <property type="entry name" value="selA"/>
    <property type="match status" value="1"/>
</dbReference>
<dbReference type="PANTHER" id="PTHR32328">
    <property type="entry name" value="L-SERYL-TRNA(SEC) SELENIUM TRANSFERASE"/>
    <property type="match status" value="1"/>
</dbReference>
<dbReference type="PANTHER" id="PTHR32328:SF0">
    <property type="entry name" value="L-SERYL-TRNA(SEC) SELENIUM TRANSFERASE"/>
    <property type="match status" value="1"/>
</dbReference>
<dbReference type="Pfam" id="PF03841">
    <property type="entry name" value="SelA"/>
    <property type="match status" value="1"/>
</dbReference>
<dbReference type="SUPFAM" id="SSF53383">
    <property type="entry name" value="PLP-dependent transferases"/>
    <property type="match status" value="1"/>
</dbReference>
<keyword id="KW-0963">Cytoplasm</keyword>
<keyword id="KW-0648">Protein biosynthesis</keyword>
<keyword id="KW-0663">Pyridoxal phosphate</keyword>
<keyword id="KW-0711">Selenium</keyword>
<keyword id="KW-0808">Transferase</keyword>
<comment type="function">
    <text evidence="1">Converts seryl-tRNA(Sec) to selenocysteinyl-tRNA(Sec) required for selenoprotein biosynthesis.</text>
</comment>
<comment type="catalytic activity">
    <reaction evidence="1">
        <text>L-seryl-tRNA(Sec) + selenophosphate + H(+) = L-selenocysteinyl-tRNA(Sec) + phosphate</text>
        <dbReference type="Rhea" id="RHEA:22728"/>
        <dbReference type="Rhea" id="RHEA-COMP:9742"/>
        <dbReference type="Rhea" id="RHEA-COMP:9743"/>
        <dbReference type="ChEBI" id="CHEBI:15378"/>
        <dbReference type="ChEBI" id="CHEBI:16144"/>
        <dbReference type="ChEBI" id="CHEBI:43474"/>
        <dbReference type="ChEBI" id="CHEBI:78533"/>
        <dbReference type="ChEBI" id="CHEBI:78573"/>
        <dbReference type="EC" id="2.9.1.1"/>
    </reaction>
</comment>
<comment type="cofactor">
    <cofactor evidence="1">
        <name>pyridoxal 5'-phosphate</name>
        <dbReference type="ChEBI" id="CHEBI:597326"/>
    </cofactor>
</comment>
<comment type="pathway">
    <text evidence="1">Aminoacyl-tRNA biosynthesis; selenocysteinyl-tRNA(Sec) biosynthesis; selenocysteinyl-tRNA(Sec) from L-seryl-tRNA(Sec) (bacterial route): step 1/1.</text>
</comment>
<comment type="subcellular location">
    <subcellularLocation>
        <location evidence="1">Cytoplasm</location>
    </subcellularLocation>
</comment>
<comment type="similarity">
    <text evidence="1">Belongs to the SelA family.</text>
</comment>
<organism>
    <name type="scientific">Campylobacter concisus (strain 13826)</name>
    <dbReference type="NCBI Taxonomy" id="360104"/>
    <lineage>
        <taxon>Bacteria</taxon>
        <taxon>Pseudomonadati</taxon>
        <taxon>Campylobacterota</taxon>
        <taxon>Epsilonproteobacteria</taxon>
        <taxon>Campylobacterales</taxon>
        <taxon>Campylobacteraceae</taxon>
        <taxon>Campylobacter</taxon>
    </lineage>
</organism>
<proteinExistence type="inferred from homology"/>
<protein>
    <recommendedName>
        <fullName evidence="1">L-seryl-tRNA(Sec) selenium transferase</fullName>
        <ecNumber evidence="1">2.9.1.1</ecNumber>
    </recommendedName>
    <alternativeName>
        <fullName evidence="1">Selenocysteine synthase</fullName>
        <shortName evidence="1">Sec synthase</shortName>
    </alternativeName>
    <alternativeName>
        <fullName evidence="1">Selenocysteinyl-tRNA(Sec) synthase</fullName>
    </alternativeName>
</protein>
<reference key="1">
    <citation type="submission" date="2007-10" db="EMBL/GenBank/DDBJ databases">
        <title>Genome sequence of Campylobacter concisus 13826 isolated from human feces.</title>
        <authorList>
            <person name="Fouts D.E."/>
            <person name="Mongodin E.F."/>
            <person name="Puiu D."/>
            <person name="Sebastian Y."/>
            <person name="Miller W.G."/>
            <person name="Mandrell R.E."/>
            <person name="On S."/>
            <person name="Nelson K.E."/>
        </authorList>
    </citation>
    <scope>NUCLEOTIDE SEQUENCE [LARGE SCALE GENOMIC DNA]</scope>
    <source>
        <strain>13826</strain>
    </source>
</reference>
<gene>
    <name evidence="1" type="primary">selA</name>
    <name type="ordered locus">Ccon26_02980</name>
    <name type="ORF">CCC13826_0755</name>
</gene>
<sequence>MNDLRNIPQVDKIIKNEAFSGLDTSLVTMLARQILDEVRAKILNENASFESEEIINLILDEYYKFNEASLQRVLNLTGVTIHTNLARSVIDKEILKRATPVITGYSNLEYNLKTGSRGNRYDYVGSLIARAFGFEDAIVVNNNASAVFLVLNTFAKGREVVVSRGELVEIGGSFRVPEVMANAGCILKEVGTTNKTRLNDYEEAISDETAMLVKVHRSNFDIVGFSEETTANELSELASRQNLIDYFDLGSGFYGNLPFNLDKNEPDLKNLKDVSLVSFSGDKLLGAVQCGIIVGKKELIAKLRKNQLLRMLRVDKVIISLLAESIKAYLNKEFELITTQKLLHKSVKELENLANFINKSLKTPLEIVRTQTFVGGGAMPNKKIPSVALAFGGDANLNELKFRQKKVIGRIENDKFMLDLRSLLDDDVETLIKIINETEEK</sequence>
<accession>A7ZBQ0</accession>
<evidence type="ECO:0000255" key="1">
    <source>
        <dbReference type="HAMAP-Rule" id="MF_00423"/>
    </source>
</evidence>
<name>SELA_CAMC1</name>